<protein>
    <recommendedName>
        <fullName>Uncharacterized protein YnhF</fullName>
    </recommendedName>
</protein>
<sequence>MSTDLKFSLVTTIIVLGLIVAVGLTAALH</sequence>
<reference key="1">
    <citation type="journal article" date="2006" name="Mol. Microbiol.">
        <title>Role of pathogenicity island-associated integrases in the genome plasticity of uropathogenic Escherichia coli strain 536.</title>
        <authorList>
            <person name="Hochhut B."/>
            <person name="Wilde C."/>
            <person name="Balling G."/>
            <person name="Middendorf B."/>
            <person name="Dobrindt U."/>
            <person name="Brzuszkiewicz E."/>
            <person name="Gottschalk G."/>
            <person name="Carniel E."/>
            <person name="Hacker J."/>
        </authorList>
    </citation>
    <scope>NUCLEOTIDE SEQUENCE [LARGE SCALE GENOMIC DNA]</scope>
    <source>
        <strain>536 / UPEC</strain>
    </source>
</reference>
<feature type="chain" id="PRO_0000311790" description="Uncharacterized protein YnhF">
    <location>
        <begin position="1"/>
        <end position="29"/>
    </location>
</feature>
<feature type="transmembrane region" description="Helical" evidence="1">
    <location>
        <begin position="7"/>
        <end position="27"/>
    </location>
</feature>
<proteinExistence type="predicted"/>
<keyword id="KW-0997">Cell inner membrane</keyword>
<keyword id="KW-1003">Cell membrane</keyword>
<keyword id="KW-0472">Membrane</keyword>
<keyword id="KW-0812">Transmembrane</keyword>
<keyword id="KW-1133">Transmembrane helix</keyword>
<name>YNHF_ECOL5</name>
<evidence type="ECO:0000255" key="1"/>
<evidence type="ECO:0000305" key="2"/>
<organism>
    <name type="scientific">Escherichia coli O6:K15:H31 (strain 536 / UPEC)</name>
    <dbReference type="NCBI Taxonomy" id="362663"/>
    <lineage>
        <taxon>Bacteria</taxon>
        <taxon>Pseudomonadati</taxon>
        <taxon>Pseudomonadota</taxon>
        <taxon>Gammaproteobacteria</taxon>
        <taxon>Enterobacterales</taxon>
        <taxon>Enterobacteriaceae</taxon>
        <taxon>Escherichia</taxon>
    </lineage>
</organism>
<comment type="subcellular location">
    <subcellularLocation>
        <location evidence="2">Cell inner membrane</location>
        <topology evidence="2">Single-pass membrane protein</topology>
    </subcellularLocation>
</comment>
<gene>
    <name type="primary">ynhF</name>
    <name type="ordered locus">ECP_1603</name>
</gene>
<dbReference type="EMBL" id="CP000247">
    <property type="protein sequence ID" value="ABG69608.1"/>
    <property type="molecule type" value="Genomic_DNA"/>
</dbReference>
<dbReference type="RefSeq" id="WP_000102278.1">
    <property type="nucleotide sequence ID" value="NC_008253.1"/>
</dbReference>
<dbReference type="SMR" id="Q0THH1"/>
<dbReference type="GeneID" id="93775812"/>
<dbReference type="KEGG" id="ecp:ECP_1603"/>
<dbReference type="HOGENOM" id="CLU_213449_2_2_6"/>
<dbReference type="Proteomes" id="UP000009182">
    <property type="component" value="Chromosome"/>
</dbReference>
<dbReference type="GO" id="GO:0005886">
    <property type="term" value="C:plasma membrane"/>
    <property type="evidence" value="ECO:0007669"/>
    <property type="project" value="UniProtKB-SubCell"/>
</dbReference>
<dbReference type="InterPro" id="IPR047743">
    <property type="entry name" value="YnhF-like"/>
</dbReference>
<dbReference type="NCBIfam" id="NF033411">
    <property type="entry name" value="small_mem_YnhF"/>
    <property type="match status" value="1"/>
</dbReference>
<accession>Q0THH1</accession>